<proteinExistence type="inferred from homology"/>
<organism>
    <name type="scientific">Rhizobium meliloti (strain 1021)</name>
    <name type="common">Ensifer meliloti</name>
    <name type="synonym">Sinorhizobium meliloti</name>
    <dbReference type="NCBI Taxonomy" id="266834"/>
    <lineage>
        <taxon>Bacteria</taxon>
        <taxon>Pseudomonadati</taxon>
        <taxon>Pseudomonadota</taxon>
        <taxon>Alphaproteobacteria</taxon>
        <taxon>Hyphomicrobiales</taxon>
        <taxon>Rhizobiaceae</taxon>
        <taxon>Sinorhizobium/Ensifer group</taxon>
        <taxon>Sinorhizobium</taxon>
    </lineage>
</organism>
<protein>
    <recommendedName>
        <fullName evidence="1">ATP-dependent protease ATPase subunit HslU</fullName>
    </recommendedName>
    <alternativeName>
        <fullName evidence="1">Unfoldase HslU</fullName>
    </alternativeName>
</protein>
<dbReference type="EMBL" id="AL591688">
    <property type="protein sequence ID" value="CAC41445.1"/>
    <property type="molecule type" value="Genomic_DNA"/>
</dbReference>
<dbReference type="RefSeq" id="NP_384164.1">
    <property type="nucleotide sequence ID" value="NC_003047.1"/>
</dbReference>
<dbReference type="RefSeq" id="WP_010968322.1">
    <property type="nucleotide sequence ID" value="NC_003047.1"/>
</dbReference>
<dbReference type="SMR" id="Q92TA7"/>
<dbReference type="EnsemblBacteria" id="CAC41445">
    <property type="protein sequence ID" value="CAC41445"/>
    <property type="gene ID" value="SMc02577"/>
</dbReference>
<dbReference type="GeneID" id="89574375"/>
<dbReference type="KEGG" id="sme:SMc02577"/>
<dbReference type="PATRIC" id="fig|266834.11.peg.1412"/>
<dbReference type="eggNOG" id="COG1220">
    <property type="taxonomic scope" value="Bacteria"/>
</dbReference>
<dbReference type="HOGENOM" id="CLU_033123_0_0_5"/>
<dbReference type="OrthoDB" id="9804062at2"/>
<dbReference type="BRENDA" id="3.4.25.2">
    <property type="organism ID" value="5347"/>
</dbReference>
<dbReference type="Proteomes" id="UP000001976">
    <property type="component" value="Chromosome"/>
</dbReference>
<dbReference type="GO" id="GO:0009376">
    <property type="term" value="C:HslUV protease complex"/>
    <property type="evidence" value="ECO:0007669"/>
    <property type="project" value="UniProtKB-UniRule"/>
</dbReference>
<dbReference type="GO" id="GO:0005524">
    <property type="term" value="F:ATP binding"/>
    <property type="evidence" value="ECO:0007669"/>
    <property type="project" value="UniProtKB-UniRule"/>
</dbReference>
<dbReference type="GO" id="GO:0016887">
    <property type="term" value="F:ATP hydrolysis activity"/>
    <property type="evidence" value="ECO:0007669"/>
    <property type="project" value="InterPro"/>
</dbReference>
<dbReference type="GO" id="GO:0008233">
    <property type="term" value="F:peptidase activity"/>
    <property type="evidence" value="ECO:0007669"/>
    <property type="project" value="InterPro"/>
</dbReference>
<dbReference type="GO" id="GO:0036402">
    <property type="term" value="F:proteasome-activating activity"/>
    <property type="evidence" value="ECO:0007669"/>
    <property type="project" value="UniProtKB-UniRule"/>
</dbReference>
<dbReference type="GO" id="GO:0043335">
    <property type="term" value="P:protein unfolding"/>
    <property type="evidence" value="ECO:0007669"/>
    <property type="project" value="UniProtKB-UniRule"/>
</dbReference>
<dbReference type="GO" id="GO:0051603">
    <property type="term" value="P:proteolysis involved in protein catabolic process"/>
    <property type="evidence" value="ECO:0007669"/>
    <property type="project" value="TreeGrafter"/>
</dbReference>
<dbReference type="CDD" id="cd19498">
    <property type="entry name" value="RecA-like_HslU"/>
    <property type="match status" value="1"/>
</dbReference>
<dbReference type="FunFam" id="3.40.50.300:FF:000213">
    <property type="entry name" value="ATP-dependent protease ATPase subunit HslU"/>
    <property type="match status" value="1"/>
</dbReference>
<dbReference type="FunFam" id="3.40.50.300:FF:000220">
    <property type="entry name" value="ATP-dependent protease ATPase subunit HslU"/>
    <property type="match status" value="1"/>
</dbReference>
<dbReference type="Gene3D" id="1.10.8.60">
    <property type="match status" value="1"/>
</dbReference>
<dbReference type="Gene3D" id="3.40.50.300">
    <property type="entry name" value="P-loop containing nucleotide triphosphate hydrolases"/>
    <property type="match status" value="2"/>
</dbReference>
<dbReference type="HAMAP" id="MF_00249">
    <property type="entry name" value="HslU"/>
    <property type="match status" value="1"/>
</dbReference>
<dbReference type="InterPro" id="IPR003593">
    <property type="entry name" value="AAA+_ATPase"/>
</dbReference>
<dbReference type="InterPro" id="IPR050052">
    <property type="entry name" value="ATP-dep_Clp_protease_ClpX"/>
</dbReference>
<dbReference type="InterPro" id="IPR003959">
    <property type="entry name" value="ATPase_AAA_core"/>
</dbReference>
<dbReference type="InterPro" id="IPR019489">
    <property type="entry name" value="Clp_ATPase_C"/>
</dbReference>
<dbReference type="InterPro" id="IPR004491">
    <property type="entry name" value="HslU"/>
</dbReference>
<dbReference type="InterPro" id="IPR027417">
    <property type="entry name" value="P-loop_NTPase"/>
</dbReference>
<dbReference type="NCBIfam" id="TIGR00390">
    <property type="entry name" value="hslU"/>
    <property type="match status" value="1"/>
</dbReference>
<dbReference type="NCBIfam" id="NF003544">
    <property type="entry name" value="PRK05201.1"/>
    <property type="match status" value="1"/>
</dbReference>
<dbReference type="PANTHER" id="PTHR48102">
    <property type="entry name" value="ATP-DEPENDENT CLP PROTEASE ATP-BINDING SUBUNIT CLPX-LIKE, MITOCHONDRIAL-RELATED"/>
    <property type="match status" value="1"/>
</dbReference>
<dbReference type="PANTHER" id="PTHR48102:SF3">
    <property type="entry name" value="ATP-DEPENDENT PROTEASE ATPASE SUBUNIT HSLU"/>
    <property type="match status" value="1"/>
</dbReference>
<dbReference type="Pfam" id="PF00004">
    <property type="entry name" value="AAA"/>
    <property type="match status" value="1"/>
</dbReference>
<dbReference type="Pfam" id="PF07724">
    <property type="entry name" value="AAA_2"/>
    <property type="match status" value="1"/>
</dbReference>
<dbReference type="Pfam" id="PF10431">
    <property type="entry name" value="ClpB_D2-small"/>
    <property type="match status" value="1"/>
</dbReference>
<dbReference type="SMART" id="SM00382">
    <property type="entry name" value="AAA"/>
    <property type="match status" value="1"/>
</dbReference>
<dbReference type="SMART" id="SM01086">
    <property type="entry name" value="ClpB_D2-small"/>
    <property type="match status" value="1"/>
</dbReference>
<dbReference type="SUPFAM" id="SSF52540">
    <property type="entry name" value="P-loop containing nucleoside triphosphate hydrolases"/>
    <property type="match status" value="1"/>
</dbReference>
<reference key="1">
    <citation type="journal article" date="2001" name="Proc. Natl. Acad. Sci. U.S.A.">
        <title>Analysis of the chromosome sequence of the legume symbiont Sinorhizobium meliloti strain 1021.</title>
        <authorList>
            <person name="Capela D."/>
            <person name="Barloy-Hubler F."/>
            <person name="Gouzy J."/>
            <person name="Bothe G."/>
            <person name="Ampe F."/>
            <person name="Batut J."/>
            <person name="Boistard P."/>
            <person name="Becker A."/>
            <person name="Boutry M."/>
            <person name="Cadieu E."/>
            <person name="Dreano S."/>
            <person name="Gloux S."/>
            <person name="Godrie T."/>
            <person name="Goffeau A."/>
            <person name="Kahn D."/>
            <person name="Kiss E."/>
            <person name="Lelaure V."/>
            <person name="Masuy D."/>
            <person name="Pohl T."/>
            <person name="Portetelle D."/>
            <person name="Puehler A."/>
            <person name="Purnelle B."/>
            <person name="Ramsperger U."/>
            <person name="Renard C."/>
            <person name="Thebault P."/>
            <person name="Vandenbol M."/>
            <person name="Weidner S."/>
            <person name="Galibert F."/>
        </authorList>
    </citation>
    <scope>NUCLEOTIDE SEQUENCE [LARGE SCALE GENOMIC DNA]</scope>
    <source>
        <strain>1021</strain>
    </source>
</reference>
<reference key="2">
    <citation type="journal article" date="2001" name="Science">
        <title>The composite genome of the legume symbiont Sinorhizobium meliloti.</title>
        <authorList>
            <person name="Galibert F."/>
            <person name="Finan T.M."/>
            <person name="Long S.R."/>
            <person name="Puehler A."/>
            <person name="Abola P."/>
            <person name="Ampe F."/>
            <person name="Barloy-Hubler F."/>
            <person name="Barnett M.J."/>
            <person name="Becker A."/>
            <person name="Boistard P."/>
            <person name="Bothe G."/>
            <person name="Boutry M."/>
            <person name="Bowser L."/>
            <person name="Buhrmester J."/>
            <person name="Cadieu E."/>
            <person name="Capela D."/>
            <person name="Chain P."/>
            <person name="Cowie A."/>
            <person name="Davis R.W."/>
            <person name="Dreano S."/>
            <person name="Federspiel N.A."/>
            <person name="Fisher R.F."/>
            <person name="Gloux S."/>
            <person name="Godrie T."/>
            <person name="Goffeau A."/>
            <person name="Golding B."/>
            <person name="Gouzy J."/>
            <person name="Gurjal M."/>
            <person name="Hernandez-Lucas I."/>
            <person name="Hong A."/>
            <person name="Huizar L."/>
            <person name="Hyman R.W."/>
            <person name="Jones T."/>
            <person name="Kahn D."/>
            <person name="Kahn M.L."/>
            <person name="Kalman S."/>
            <person name="Keating D.H."/>
            <person name="Kiss E."/>
            <person name="Komp C."/>
            <person name="Lelaure V."/>
            <person name="Masuy D."/>
            <person name="Palm C."/>
            <person name="Peck M.C."/>
            <person name="Pohl T.M."/>
            <person name="Portetelle D."/>
            <person name="Purnelle B."/>
            <person name="Ramsperger U."/>
            <person name="Surzycki R."/>
            <person name="Thebault P."/>
            <person name="Vandenbol M."/>
            <person name="Vorhoelter F.J."/>
            <person name="Weidner S."/>
            <person name="Wells D.H."/>
            <person name="Wong K."/>
            <person name="Yeh K.-C."/>
            <person name="Batut J."/>
        </authorList>
    </citation>
    <scope>NUCLEOTIDE SEQUENCE [LARGE SCALE GENOMIC DNA]</scope>
    <source>
        <strain>1021</strain>
    </source>
</reference>
<keyword id="KW-0067">ATP-binding</keyword>
<keyword id="KW-0143">Chaperone</keyword>
<keyword id="KW-0963">Cytoplasm</keyword>
<keyword id="KW-0547">Nucleotide-binding</keyword>
<keyword id="KW-1185">Reference proteome</keyword>
<evidence type="ECO:0000255" key="1">
    <source>
        <dbReference type="HAMAP-Rule" id="MF_00249"/>
    </source>
</evidence>
<name>HSLU_RHIME</name>
<gene>
    <name evidence="1" type="primary">hslU</name>
    <name type="ordered locus">R00058</name>
    <name type="ORF">SMc02577</name>
</gene>
<accession>Q92TA7</accession>
<comment type="function">
    <text evidence="1">ATPase subunit of a proteasome-like degradation complex; this subunit has chaperone activity. The binding of ATP and its subsequent hydrolysis by HslU are essential for unfolding of protein substrates subsequently hydrolyzed by HslV. HslU recognizes the N-terminal part of its protein substrates and unfolds these before they are guided to HslV for hydrolysis.</text>
</comment>
<comment type="subunit">
    <text evidence="1">A double ring-shaped homohexamer of HslV is capped on each side by a ring-shaped HslU homohexamer. The assembly of the HslU/HslV complex is dependent on binding of ATP.</text>
</comment>
<comment type="subcellular location">
    <subcellularLocation>
        <location evidence="1">Cytoplasm</location>
    </subcellularLocation>
</comment>
<comment type="similarity">
    <text evidence="1">Belongs to the ClpX chaperone family. HslU subfamily.</text>
</comment>
<sequence length="435" mass="47774">MSNFSPREIVSELDRYIIGQKDAKRAVAIALRNRWRRQQLDDELRDEVMPKNILMIGPTGVGKTEISRRLAKLAGAPFVKVEATKFTEVGYVGRDVEQIVRDLVEVGISLVREKRRAEVKAKAHQNAEERVLDALVGTTASPATRDSFRKKLRANELDDKEIEVDVAEAGSPGGAFEIPGMPGANIGVLNLSEMFGKALGGRTKKVKTTVKDSYALLVNDESDKLLDNEQIQREAVAAAENDGIVFLDEIDKIATREGGIGAGVSREGVQRDLLPLVEGTTVATKYGPVKTDHILFIASGAFHVAKPSDLLPELQGRLPIRVELRALTKEDFRRILTETEASLIRQYKALLETEGVALDFTEDAIDALAEVAVQLNANVENIGARRLQTVMERVLDDVSFNAPDRGGQGVTIDAEYVRRHVGDLAANTDLSRYIL</sequence>
<feature type="chain" id="PRO_0000160536" description="ATP-dependent protease ATPase subunit HslU">
    <location>
        <begin position="1"/>
        <end position="435"/>
    </location>
</feature>
<feature type="binding site" evidence="1">
    <location>
        <position position="18"/>
    </location>
    <ligand>
        <name>ATP</name>
        <dbReference type="ChEBI" id="CHEBI:30616"/>
    </ligand>
</feature>
<feature type="binding site" evidence="1">
    <location>
        <begin position="60"/>
        <end position="65"/>
    </location>
    <ligand>
        <name>ATP</name>
        <dbReference type="ChEBI" id="CHEBI:30616"/>
    </ligand>
</feature>
<feature type="binding site" evidence="1">
    <location>
        <position position="248"/>
    </location>
    <ligand>
        <name>ATP</name>
        <dbReference type="ChEBI" id="CHEBI:30616"/>
    </ligand>
</feature>
<feature type="binding site" evidence="1">
    <location>
        <position position="313"/>
    </location>
    <ligand>
        <name>ATP</name>
        <dbReference type="ChEBI" id="CHEBI:30616"/>
    </ligand>
</feature>
<feature type="binding site" evidence="1">
    <location>
        <position position="385"/>
    </location>
    <ligand>
        <name>ATP</name>
        <dbReference type="ChEBI" id="CHEBI:30616"/>
    </ligand>
</feature>